<sequence length="66" mass="7697">MPKMKTHRGAAKRVKRTASGQLKRSRAFTSHLFANKSTKQKRQLRKARLVSKSDMKRVKQLLAYKK</sequence>
<gene>
    <name evidence="1" type="primary">rpmI</name>
    <name type="ordered locus">SACOL1726</name>
</gene>
<proteinExistence type="inferred from homology"/>
<evidence type="ECO:0000255" key="1">
    <source>
        <dbReference type="HAMAP-Rule" id="MF_00514"/>
    </source>
</evidence>
<evidence type="ECO:0000256" key="2">
    <source>
        <dbReference type="SAM" id="MobiDB-lite"/>
    </source>
</evidence>
<evidence type="ECO:0000305" key="3"/>
<feature type="chain" id="PRO_0000177417" description="Large ribosomal subunit protein bL35">
    <location>
        <begin position="1"/>
        <end position="66"/>
    </location>
</feature>
<feature type="region of interest" description="Disordered" evidence="2">
    <location>
        <begin position="1"/>
        <end position="49"/>
    </location>
</feature>
<feature type="compositionally biased region" description="Basic residues" evidence="2">
    <location>
        <begin position="1"/>
        <end position="16"/>
    </location>
</feature>
<feature type="compositionally biased region" description="Basic residues" evidence="2">
    <location>
        <begin position="38"/>
        <end position="49"/>
    </location>
</feature>
<keyword id="KW-0687">Ribonucleoprotein</keyword>
<keyword id="KW-0689">Ribosomal protein</keyword>
<reference key="1">
    <citation type="journal article" date="2005" name="J. Bacteriol.">
        <title>Insights on evolution of virulence and resistance from the complete genome analysis of an early methicillin-resistant Staphylococcus aureus strain and a biofilm-producing methicillin-resistant Staphylococcus epidermidis strain.</title>
        <authorList>
            <person name="Gill S.R."/>
            <person name="Fouts D.E."/>
            <person name="Archer G.L."/>
            <person name="Mongodin E.F."/>
            <person name="DeBoy R.T."/>
            <person name="Ravel J."/>
            <person name="Paulsen I.T."/>
            <person name="Kolonay J.F."/>
            <person name="Brinkac L.M."/>
            <person name="Beanan M.J."/>
            <person name="Dodson R.J."/>
            <person name="Daugherty S.C."/>
            <person name="Madupu R."/>
            <person name="Angiuoli S.V."/>
            <person name="Durkin A.S."/>
            <person name="Haft D.H."/>
            <person name="Vamathevan J.J."/>
            <person name="Khouri H."/>
            <person name="Utterback T.R."/>
            <person name="Lee C."/>
            <person name="Dimitrov G."/>
            <person name="Jiang L."/>
            <person name="Qin H."/>
            <person name="Weidman J."/>
            <person name="Tran K."/>
            <person name="Kang K.H."/>
            <person name="Hance I.R."/>
            <person name="Nelson K.E."/>
            <person name="Fraser C.M."/>
        </authorList>
    </citation>
    <scope>NUCLEOTIDE SEQUENCE [LARGE SCALE GENOMIC DNA]</scope>
    <source>
        <strain>COL</strain>
    </source>
</reference>
<name>RL35_STAAC</name>
<accession>Q5HF93</accession>
<organism>
    <name type="scientific">Staphylococcus aureus (strain COL)</name>
    <dbReference type="NCBI Taxonomy" id="93062"/>
    <lineage>
        <taxon>Bacteria</taxon>
        <taxon>Bacillati</taxon>
        <taxon>Bacillota</taxon>
        <taxon>Bacilli</taxon>
        <taxon>Bacillales</taxon>
        <taxon>Staphylococcaceae</taxon>
        <taxon>Staphylococcus</taxon>
    </lineage>
</organism>
<protein>
    <recommendedName>
        <fullName evidence="1">Large ribosomal subunit protein bL35</fullName>
    </recommendedName>
    <alternativeName>
        <fullName evidence="3">50S ribosomal protein L35</fullName>
    </alternativeName>
</protein>
<comment type="similarity">
    <text evidence="1">Belongs to the bacterial ribosomal protein bL35 family.</text>
</comment>
<dbReference type="EMBL" id="CP000046">
    <property type="protein sequence ID" value="AAW36831.1"/>
    <property type="molecule type" value="Genomic_DNA"/>
</dbReference>
<dbReference type="RefSeq" id="WP_001125540.1">
    <property type="nucleotide sequence ID" value="NZ_JBGOFO010000003.1"/>
</dbReference>
<dbReference type="SMR" id="Q5HF93"/>
<dbReference type="GeneID" id="98346041"/>
<dbReference type="KEGG" id="sac:SACOL1726"/>
<dbReference type="HOGENOM" id="CLU_169643_3_0_9"/>
<dbReference type="Proteomes" id="UP000000530">
    <property type="component" value="Chromosome"/>
</dbReference>
<dbReference type="GO" id="GO:0022625">
    <property type="term" value="C:cytosolic large ribosomal subunit"/>
    <property type="evidence" value="ECO:0007669"/>
    <property type="project" value="TreeGrafter"/>
</dbReference>
<dbReference type="GO" id="GO:0003735">
    <property type="term" value="F:structural constituent of ribosome"/>
    <property type="evidence" value="ECO:0007669"/>
    <property type="project" value="InterPro"/>
</dbReference>
<dbReference type="GO" id="GO:0006412">
    <property type="term" value="P:translation"/>
    <property type="evidence" value="ECO:0007669"/>
    <property type="project" value="UniProtKB-UniRule"/>
</dbReference>
<dbReference type="FunFam" id="4.10.410.60:FF:000001">
    <property type="entry name" value="50S ribosomal protein L35"/>
    <property type="match status" value="1"/>
</dbReference>
<dbReference type="Gene3D" id="4.10.410.60">
    <property type="match status" value="1"/>
</dbReference>
<dbReference type="HAMAP" id="MF_00514">
    <property type="entry name" value="Ribosomal_bL35"/>
    <property type="match status" value="1"/>
</dbReference>
<dbReference type="InterPro" id="IPR001706">
    <property type="entry name" value="Ribosomal_bL35"/>
</dbReference>
<dbReference type="InterPro" id="IPR021137">
    <property type="entry name" value="Ribosomal_bL35-like"/>
</dbReference>
<dbReference type="InterPro" id="IPR018265">
    <property type="entry name" value="Ribosomal_bL35_CS"/>
</dbReference>
<dbReference type="InterPro" id="IPR037229">
    <property type="entry name" value="Ribosomal_bL35_sf"/>
</dbReference>
<dbReference type="NCBIfam" id="TIGR00001">
    <property type="entry name" value="rpmI_bact"/>
    <property type="match status" value="1"/>
</dbReference>
<dbReference type="PANTHER" id="PTHR33343">
    <property type="entry name" value="54S RIBOSOMAL PROTEIN BL35M"/>
    <property type="match status" value="1"/>
</dbReference>
<dbReference type="PANTHER" id="PTHR33343:SF1">
    <property type="entry name" value="LARGE RIBOSOMAL SUBUNIT PROTEIN BL35M"/>
    <property type="match status" value="1"/>
</dbReference>
<dbReference type="Pfam" id="PF01632">
    <property type="entry name" value="Ribosomal_L35p"/>
    <property type="match status" value="1"/>
</dbReference>
<dbReference type="PRINTS" id="PR00064">
    <property type="entry name" value="RIBOSOMALL35"/>
</dbReference>
<dbReference type="SUPFAM" id="SSF143034">
    <property type="entry name" value="L35p-like"/>
    <property type="match status" value="1"/>
</dbReference>
<dbReference type="PROSITE" id="PS00936">
    <property type="entry name" value="RIBOSOMAL_L35"/>
    <property type="match status" value="1"/>
</dbReference>